<name>BPT_RHILO</name>
<gene>
    <name evidence="1 3" type="primary">bpt</name>
    <name type="ordered locus">mll8364</name>
</gene>
<organism>
    <name type="scientific">Mesorhizobium japonicum (strain LMG 29417 / CECT 9101 / MAFF 303099)</name>
    <name type="common">Mesorhizobium loti (strain MAFF 303099)</name>
    <dbReference type="NCBI Taxonomy" id="266835"/>
    <lineage>
        <taxon>Bacteria</taxon>
        <taxon>Pseudomonadati</taxon>
        <taxon>Pseudomonadota</taxon>
        <taxon>Alphaproteobacteria</taxon>
        <taxon>Hyphomicrobiales</taxon>
        <taxon>Phyllobacteriaceae</taxon>
        <taxon>Mesorhizobium</taxon>
    </lineage>
</organism>
<reference key="1">
    <citation type="journal article" date="2000" name="DNA Res.">
        <title>Complete genome structure of the nitrogen-fixing symbiotic bacterium Mesorhizobium loti.</title>
        <authorList>
            <person name="Kaneko T."/>
            <person name="Nakamura Y."/>
            <person name="Sato S."/>
            <person name="Asamizu E."/>
            <person name="Kato T."/>
            <person name="Sasamoto S."/>
            <person name="Watanabe A."/>
            <person name="Idesawa K."/>
            <person name="Ishikawa A."/>
            <person name="Kawashima K."/>
            <person name="Kimura T."/>
            <person name="Kishida Y."/>
            <person name="Kiyokawa C."/>
            <person name="Kohara M."/>
            <person name="Matsumoto M."/>
            <person name="Matsuno A."/>
            <person name="Mochizuki Y."/>
            <person name="Nakayama S."/>
            <person name="Nakazaki N."/>
            <person name="Shimpo S."/>
            <person name="Sugimoto M."/>
            <person name="Takeuchi C."/>
            <person name="Yamada M."/>
            <person name="Tabata S."/>
        </authorList>
    </citation>
    <scope>NUCLEOTIDE SEQUENCE [LARGE SCALE GENOMIC DNA]</scope>
    <source>
        <strain>LMG 29417 / CECT 9101 / MAFF 303099</strain>
    </source>
</reference>
<reference key="2">
    <citation type="journal article" date="2006" name="Proc. Natl. Acad. Sci. U.S.A.">
        <title>Aminoacyl-transferases and the N-end rule pathway of prokaryotic/eukaryotic specificity in a human pathogen.</title>
        <authorList>
            <person name="Graciet E."/>
            <person name="Hu R.G."/>
            <person name="Piatkov K."/>
            <person name="Rhee J.H."/>
            <person name="Schwarz E.M."/>
            <person name="Varshavsky A."/>
        </authorList>
    </citation>
    <scope>FUNCTION</scope>
    <scope>CATALYTIC ACTIVITY</scope>
</reference>
<protein>
    <recommendedName>
        <fullName evidence="1 4">Aspartate/glutamate leucyltransferase</fullName>
        <ecNumber evidence="1 2">2.3.2.29</ecNumber>
    </recommendedName>
</protein>
<accession>Q983E4</accession>
<proteinExistence type="evidence at protein level"/>
<keyword id="KW-0012">Acyltransferase</keyword>
<keyword id="KW-0963">Cytoplasm</keyword>
<keyword id="KW-0808">Transferase</keyword>
<sequence>MTQHPTQSPQFFLTAPSPCPYLDGQFERKVFTHLVGDKASEMNDLLTQGGFRRSQNIAYRPACETCRACVSVRILAQEFTASRNMKRVLQHNSDLVGAMHNAEPSTEQYSLFRSYLDARHRRGGMSDMTVLDYAMMVEDTHVDTKVIEYRRRGPDTFITGKGQGELIAVALTDKMADGLSMVYSYFNPEFEERSLGTFMILDHIARARAMGLPHVYLGYWVNGSRKMNYKMRFMPQEHLGPKGWERYTNEAVSR</sequence>
<evidence type="ECO:0000255" key="1">
    <source>
        <dbReference type="HAMAP-Rule" id="MF_00689"/>
    </source>
</evidence>
<evidence type="ECO:0000269" key="2">
    <source>
    </source>
</evidence>
<evidence type="ECO:0000303" key="3">
    <source>
    </source>
</evidence>
<evidence type="ECO:0000305" key="4"/>
<comment type="function">
    <text evidence="1 2">Functions in the N-end rule pathway of protein degradation where it conjugates Leu from its aminoacyl-tRNA to the N-termini of proteins containing an N-terminal aspartate or glutamate.</text>
</comment>
<comment type="catalytic activity">
    <reaction evidence="1 2">
        <text>N-terminal L-glutamyl-[protein] + L-leucyl-tRNA(Leu) = N-terminal L-leucyl-L-glutamyl-[protein] + tRNA(Leu) + H(+)</text>
        <dbReference type="Rhea" id="RHEA:50412"/>
        <dbReference type="Rhea" id="RHEA-COMP:9613"/>
        <dbReference type="Rhea" id="RHEA-COMP:9622"/>
        <dbReference type="Rhea" id="RHEA-COMP:12664"/>
        <dbReference type="Rhea" id="RHEA-COMP:12668"/>
        <dbReference type="ChEBI" id="CHEBI:15378"/>
        <dbReference type="ChEBI" id="CHEBI:64721"/>
        <dbReference type="ChEBI" id="CHEBI:78442"/>
        <dbReference type="ChEBI" id="CHEBI:78494"/>
        <dbReference type="ChEBI" id="CHEBI:133041"/>
        <dbReference type="EC" id="2.3.2.29"/>
    </reaction>
</comment>
<comment type="catalytic activity">
    <reaction evidence="1">
        <text>N-terminal L-aspartyl-[protein] + L-leucyl-tRNA(Leu) = N-terminal L-leucyl-L-aspartyl-[protein] + tRNA(Leu) + H(+)</text>
        <dbReference type="Rhea" id="RHEA:50420"/>
        <dbReference type="Rhea" id="RHEA-COMP:9613"/>
        <dbReference type="Rhea" id="RHEA-COMP:9622"/>
        <dbReference type="Rhea" id="RHEA-COMP:12669"/>
        <dbReference type="Rhea" id="RHEA-COMP:12674"/>
        <dbReference type="ChEBI" id="CHEBI:15378"/>
        <dbReference type="ChEBI" id="CHEBI:64720"/>
        <dbReference type="ChEBI" id="CHEBI:78442"/>
        <dbReference type="ChEBI" id="CHEBI:78494"/>
        <dbReference type="ChEBI" id="CHEBI:133042"/>
        <dbReference type="EC" id="2.3.2.29"/>
    </reaction>
</comment>
<comment type="subcellular location">
    <subcellularLocation>
        <location evidence="1">Cytoplasm</location>
    </subcellularLocation>
</comment>
<comment type="similarity">
    <text evidence="1 4">Belongs to the R-transferase family. Bpt subfamily.</text>
</comment>
<dbReference type="EC" id="2.3.2.29" evidence="1 2"/>
<dbReference type="EMBL" id="BA000012">
    <property type="protein sequence ID" value="BAB53937.1"/>
    <property type="molecule type" value="Genomic_DNA"/>
</dbReference>
<dbReference type="RefSeq" id="WP_010915563.1">
    <property type="nucleotide sequence ID" value="NC_002678.2"/>
</dbReference>
<dbReference type="SMR" id="Q983E4"/>
<dbReference type="KEGG" id="mlo:mll8364"/>
<dbReference type="eggNOG" id="COG2935">
    <property type="taxonomic scope" value="Bacteria"/>
</dbReference>
<dbReference type="HOGENOM" id="CLU_077607_1_0_5"/>
<dbReference type="Proteomes" id="UP000000552">
    <property type="component" value="Chromosome"/>
</dbReference>
<dbReference type="GO" id="GO:0005737">
    <property type="term" value="C:cytoplasm"/>
    <property type="evidence" value="ECO:0007669"/>
    <property type="project" value="UniProtKB-SubCell"/>
</dbReference>
<dbReference type="GO" id="GO:0004057">
    <property type="term" value="F:arginyl-tRNA--protein transferase activity"/>
    <property type="evidence" value="ECO:0007669"/>
    <property type="project" value="InterPro"/>
</dbReference>
<dbReference type="GO" id="GO:0008914">
    <property type="term" value="F:leucyl-tRNA--protein transferase activity"/>
    <property type="evidence" value="ECO:0007669"/>
    <property type="project" value="UniProtKB-UniRule"/>
</dbReference>
<dbReference type="GO" id="GO:0071596">
    <property type="term" value="P:ubiquitin-dependent protein catabolic process via the N-end rule pathway"/>
    <property type="evidence" value="ECO:0007669"/>
    <property type="project" value="InterPro"/>
</dbReference>
<dbReference type="HAMAP" id="MF_00689">
    <property type="entry name" value="Bpt"/>
    <property type="match status" value="1"/>
</dbReference>
<dbReference type="InterPro" id="IPR016181">
    <property type="entry name" value="Acyl_CoA_acyltransferase"/>
</dbReference>
<dbReference type="InterPro" id="IPR017138">
    <property type="entry name" value="Asp_Glu_LeuTrfase"/>
</dbReference>
<dbReference type="InterPro" id="IPR030700">
    <property type="entry name" value="N-end_Aminoacyl_Trfase"/>
</dbReference>
<dbReference type="InterPro" id="IPR007472">
    <property type="entry name" value="N-end_Aminoacyl_Trfase_C"/>
</dbReference>
<dbReference type="InterPro" id="IPR007471">
    <property type="entry name" value="N-end_Aminoacyl_Trfase_N"/>
</dbReference>
<dbReference type="NCBIfam" id="NF002343">
    <property type="entry name" value="PRK01305.1-4"/>
    <property type="match status" value="1"/>
</dbReference>
<dbReference type="NCBIfam" id="NF002346">
    <property type="entry name" value="PRK01305.2-3"/>
    <property type="match status" value="1"/>
</dbReference>
<dbReference type="PANTHER" id="PTHR21367">
    <property type="entry name" value="ARGININE-TRNA-PROTEIN TRANSFERASE 1"/>
    <property type="match status" value="1"/>
</dbReference>
<dbReference type="PANTHER" id="PTHR21367:SF1">
    <property type="entry name" value="ARGINYL-TRNA--PROTEIN TRANSFERASE 1"/>
    <property type="match status" value="1"/>
</dbReference>
<dbReference type="Pfam" id="PF04377">
    <property type="entry name" value="ATE_C"/>
    <property type="match status" value="1"/>
</dbReference>
<dbReference type="Pfam" id="PF04376">
    <property type="entry name" value="ATE_N"/>
    <property type="match status" value="1"/>
</dbReference>
<dbReference type="PIRSF" id="PIRSF037208">
    <property type="entry name" value="ATE_pro_prd"/>
    <property type="match status" value="1"/>
</dbReference>
<dbReference type="SUPFAM" id="SSF55729">
    <property type="entry name" value="Acyl-CoA N-acyltransferases (Nat)"/>
    <property type="match status" value="1"/>
</dbReference>
<feature type="chain" id="PRO_0000195112" description="Aspartate/glutamate leucyltransferase">
    <location>
        <begin position="1"/>
        <end position="254"/>
    </location>
</feature>